<proteinExistence type="evidence at protein level"/>
<comment type="function">
    <text evidence="1 6 8">DNA-dependent RNA polymerase catalyzes the transcription of DNA into RNA using the four ribonucleoside triphosphates as substrates. Component of RNA polymerase II which synthesizes mRNA precursors and many functional non-coding RNAs. Pol II is the central component of the basal RNA polymerase II transcription machinery. It is composed of mobile elements that move relative to each other. RPB7 is part of a subcomplex with RPB4 that binds to a pocket formed by RPB1, RPB2 and RPB6 at the base of the clamp element. The RPB4-RPB7 subcomplex seems to lock the clamp via RPB7 in the closed conformation thus preventing double-stranded DNA to enter the active site cleft. The RPB4-RPB7 subcomplex binds single-stranded DNA and RNA. The RPB4-RPB7 subcomplex recruits FCP1 to Pol II.</text>
</comment>
<comment type="subunit">
    <text evidence="2 3 5 7 8">Component of the RNA polymerase II (Pol II) complex consisting of 12 subunits. RPB4 and RPB7 form a subcomplex that protrudes from the 10-subunit Pol II core complex. The RPB4-RPB7 subcomplex probably associates with TFG1. Interacts with NRD1 and PAT1.</text>
</comment>
<comment type="interaction">
    <interactant intactId="EBI-15790">
        <id>P34087</id>
    </interactant>
    <interactant intactId="EBI-15777">
        <id>P20433</id>
        <label>RPB4</label>
    </interactant>
    <organismsDiffer>false</organismsDiffer>
    <experiments>9</experiments>
</comment>
<comment type="subcellular location">
    <subcellularLocation>
        <location>Nucleus</location>
    </subcellularLocation>
    <subcellularLocation>
        <location>Cytoplasm</location>
    </subcellularLocation>
    <subcellularLocation>
        <location>Cytoplasm</location>
        <location>P-body</location>
    </subcellularLocation>
    <text>Seems to shuttle between nucleus and cytoplasm in a complex with RPB4.</text>
</comment>
<comment type="miscellaneous">
    <text evidence="4">Present with 6420 molecules/cell in log phase SD medium.</text>
</comment>
<comment type="similarity">
    <text evidence="9">Belongs to the eukaryotic RPB7/RPC8 RNA polymerase subunit family.</text>
</comment>
<accession>P34087</accession>
<accession>D6VT36</accession>
<keyword id="KW-0002">3D-structure</keyword>
<keyword id="KW-0963">Cytoplasm</keyword>
<keyword id="KW-0240">DNA-directed RNA polymerase</keyword>
<keyword id="KW-0539">Nucleus</keyword>
<keyword id="KW-1185">Reference proteome</keyword>
<keyword id="KW-0804">Transcription</keyword>
<sequence>MFFIKDLSLNITLHPSFFGPRMKQYLKTKLLEEVEGSCTGKFGYILCVLDYDNIDIQRGRILPTDGSAEFNVKYRAVVFKPFKGEVVDGTVVSCSQHGFEVQVGPMKVFVTKHLMPQDLTFNAGSNPPSYQSSEDVITIKSRIRVKIEGCISQVSSIHAIGSIKEDYLGAI</sequence>
<name>RPB7_YEAST</name>
<reference key="1">
    <citation type="journal article" date="1993" name="Yeast">
        <title>RPB7, one of two dissociable subunits of yeast RNA polymerase II, is essential for cell viability.</title>
        <authorList>
            <person name="McKune K."/>
            <person name="Richards K.L."/>
            <person name="Edwards A.M."/>
            <person name="Young R.A."/>
            <person name="Woychik N.A."/>
        </authorList>
    </citation>
    <scope>NUCLEOTIDE SEQUENCE [GENOMIC DNA]</scope>
</reference>
<reference key="2">
    <citation type="journal article" date="1997" name="Nature">
        <title>The nucleotide sequence of Saccharomyces cerevisiae chromosome IV.</title>
        <authorList>
            <person name="Jacq C."/>
            <person name="Alt-Moerbe J."/>
            <person name="Andre B."/>
            <person name="Arnold W."/>
            <person name="Bahr A."/>
            <person name="Ballesta J.P.G."/>
            <person name="Bargues M."/>
            <person name="Baron L."/>
            <person name="Becker A."/>
            <person name="Biteau N."/>
            <person name="Bloecker H."/>
            <person name="Blugeon C."/>
            <person name="Boskovic J."/>
            <person name="Brandt P."/>
            <person name="Brueckner M."/>
            <person name="Buitrago M.J."/>
            <person name="Coster F."/>
            <person name="Delaveau T."/>
            <person name="del Rey F."/>
            <person name="Dujon B."/>
            <person name="Eide L.G."/>
            <person name="Garcia-Cantalejo J.M."/>
            <person name="Goffeau A."/>
            <person name="Gomez-Peris A."/>
            <person name="Granotier C."/>
            <person name="Hanemann V."/>
            <person name="Hankeln T."/>
            <person name="Hoheisel J.D."/>
            <person name="Jaeger W."/>
            <person name="Jimenez A."/>
            <person name="Jonniaux J.-L."/>
            <person name="Kraemer C."/>
            <person name="Kuester H."/>
            <person name="Laamanen P."/>
            <person name="Legros Y."/>
            <person name="Louis E.J."/>
            <person name="Moeller-Rieker S."/>
            <person name="Monnet A."/>
            <person name="Moro M."/>
            <person name="Mueller-Auer S."/>
            <person name="Nussbaumer B."/>
            <person name="Paricio N."/>
            <person name="Paulin L."/>
            <person name="Perea J."/>
            <person name="Perez-Alonso M."/>
            <person name="Perez-Ortin J.E."/>
            <person name="Pohl T.M."/>
            <person name="Prydz H."/>
            <person name="Purnelle B."/>
            <person name="Rasmussen S.W."/>
            <person name="Remacha M.A."/>
            <person name="Revuelta J.L."/>
            <person name="Rieger M."/>
            <person name="Salom D."/>
            <person name="Saluz H.P."/>
            <person name="Saiz J.E."/>
            <person name="Saren A.-M."/>
            <person name="Schaefer M."/>
            <person name="Scharfe M."/>
            <person name="Schmidt E.R."/>
            <person name="Schneider C."/>
            <person name="Scholler P."/>
            <person name="Schwarz S."/>
            <person name="Soler-Mira A."/>
            <person name="Urrestarazu L.A."/>
            <person name="Verhasselt P."/>
            <person name="Vissers S."/>
            <person name="Voet M."/>
            <person name="Volckaert G."/>
            <person name="Wagner G."/>
            <person name="Wambutt R."/>
            <person name="Wedler E."/>
            <person name="Wedler H."/>
            <person name="Woelfl S."/>
            <person name="Harris D.E."/>
            <person name="Bowman S."/>
            <person name="Brown D."/>
            <person name="Churcher C.M."/>
            <person name="Connor R."/>
            <person name="Dedman K."/>
            <person name="Gentles S."/>
            <person name="Hamlin N."/>
            <person name="Hunt S."/>
            <person name="Jones L."/>
            <person name="McDonald S."/>
            <person name="Murphy L.D."/>
            <person name="Niblett D."/>
            <person name="Odell C."/>
            <person name="Oliver K."/>
            <person name="Rajandream M.A."/>
            <person name="Richards C."/>
            <person name="Shore L."/>
            <person name="Walsh S.V."/>
            <person name="Barrell B.G."/>
            <person name="Dietrich F.S."/>
            <person name="Mulligan J.T."/>
            <person name="Allen E."/>
            <person name="Araujo R."/>
            <person name="Aviles E."/>
            <person name="Berno A."/>
            <person name="Carpenter J."/>
            <person name="Chen E."/>
            <person name="Cherry J.M."/>
            <person name="Chung E."/>
            <person name="Duncan M."/>
            <person name="Hunicke-Smith S."/>
            <person name="Hyman R.W."/>
            <person name="Komp C."/>
            <person name="Lashkari D."/>
            <person name="Lew H."/>
            <person name="Lin D."/>
            <person name="Mosedale D."/>
            <person name="Nakahara K."/>
            <person name="Namath A."/>
            <person name="Oefner P."/>
            <person name="Oh C."/>
            <person name="Petel F.X."/>
            <person name="Roberts D."/>
            <person name="Schramm S."/>
            <person name="Schroeder M."/>
            <person name="Shogren T."/>
            <person name="Shroff N."/>
            <person name="Winant A."/>
            <person name="Yelton M.A."/>
            <person name="Botstein D."/>
            <person name="Davis R.W."/>
            <person name="Johnston M."/>
            <person name="Andrews S."/>
            <person name="Brinkman R."/>
            <person name="Cooper J."/>
            <person name="Ding H."/>
            <person name="Du Z."/>
            <person name="Favello A."/>
            <person name="Fulton L."/>
            <person name="Gattung S."/>
            <person name="Greco T."/>
            <person name="Hallsworth K."/>
            <person name="Hawkins J."/>
            <person name="Hillier L.W."/>
            <person name="Jier M."/>
            <person name="Johnson D."/>
            <person name="Johnston L."/>
            <person name="Kirsten J."/>
            <person name="Kucaba T."/>
            <person name="Langston Y."/>
            <person name="Latreille P."/>
            <person name="Le T."/>
            <person name="Mardis E."/>
            <person name="Menezes S."/>
            <person name="Miller N."/>
            <person name="Nhan M."/>
            <person name="Pauley A."/>
            <person name="Peluso D."/>
            <person name="Rifkin L."/>
            <person name="Riles L."/>
            <person name="Taich A."/>
            <person name="Trevaskis E."/>
            <person name="Vignati D."/>
            <person name="Wilcox L."/>
            <person name="Wohldman P."/>
            <person name="Vaudin M."/>
            <person name="Wilson R."/>
            <person name="Waterston R."/>
            <person name="Albermann K."/>
            <person name="Hani J."/>
            <person name="Heumann K."/>
            <person name="Kleine K."/>
            <person name="Mewes H.-W."/>
            <person name="Zollner A."/>
            <person name="Zaccaria P."/>
        </authorList>
    </citation>
    <scope>NUCLEOTIDE SEQUENCE [LARGE SCALE GENOMIC DNA]</scope>
    <source>
        <strain>ATCC 204508 / S288c</strain>
    </source>
</reference>
<reference key="3">
    <citation type="journal article" date="2014" name="G3 (Bethesda)">
        <title>The reference genome sequence of Saccharomyces cerevisiae: Then and now.</title>
        <authorList>
            <person name="Engel S.R."/>
            <person name="Dietrich F.S."/>
            <person name="Fisk D.G."/>
            <person name="Binkley G."/>
            <person name="Balakrishnan R."/>
            <person name="Costanzo M.C."/>
            <person name="Dwight S.S."/>
            <person name="Hitz B.C."/>
            <person name="Karra K."/>
            <person name="Nash R.S."/>
            <person name="Weng S."/>
            <person name="Wong E.D."/>
            <person name="Lloyd P."/>
            <person name="Skrzypek M.S."/>
            <person name="Miyasato S.R."/>
            <person name="Simison M."/>
            <person name="Cherry J.M."/>
        </authorList>
    </citation>
    <scope>GENOME REANNOTATION</scope>
    <source>
        <strain>ATCC 204508 / S288c</strain>
    </source>
</reference>
<reference key="4">
    <citation type="journal article" date="2003" name="Nature">
        <title>Global analysis of protein expression in yeast.</title>
        <authorList>
            <person name="Ghaemmaghami S."/>
            <person name="Huh W.-K."/>
            <person name="Bower K."/>
            <person name="Howson R.W."/>
            <person name="Belle A."/>
            <person name="Dephoure N."/>
            <person name="O'Shea E.K."/>
            <person name="Weissman J.S."/>
        </authorList>
    </citation>
    <scope>LEVEL OF PROTEIN EXPRESSION [LARGE SCALE ANALYSIS]</scope>
</reference>
<reference key="5">
    <citation type="journal article" date="2001" name="J. Biol. Chem.">
        <title>Dissociable Rpb4-Rpb7 subassembly of RNA polymerase II binds to single-strand nucleic acid and mediates a post-recruitment step in transcription initiation.</title>
        <authorList>
            <person name="Orlicky S.M."/>
            <person name="Tran P.T."/>
            <person name="Sayre M.H."/>
            <person name="Edwards A.M."/>
        </authorList>
    </citation>
    <scope>FUNCTION OF THE RPB4-RPB7 COMPLEX</scope>
    <scope>RNA-BINDING</scope>
    <scope>MUTAGENESIS OF 108-VAL--HIS-113 AND 151-ILE--HIS-158</scope>
</reference>
<reference key="6">
    <citation type="journal article" date="2004" name="Mol. Cell">
        <title>Structure and mechanism of RNA polymerase II CTD phosphatases.</title>
        <authorList>
            <person name="Kamenski T."/>
            <person name="Heilmeier S."/>
            <person name="Meinhart A."/>
            <person name="Cramer P."/>
        </authorList>
    </citation>
    <scope>FUNCTION OF THE RPB4-RPB7 COMPLEX</scope>
</reference>
<reference key="7">
    <citation type="journal article" date="2006" name="Eukaryot. Cell">
        <title>Nucleocytoplasmic shuttling of the Rpb4p and Rpb7p subunits of Saccharomyces cerevisiae RNA polymerase II by two pathways.</title>
        <authorList>
            <person name="Selitrennik M."/>
            <person name="Duek L."/>
            <person name="Lotan R."/>
            <person name="Choder M."/>
        </authorList>
    </citation>
    <scope>SUBCELLULAR LOCATION</scope>
</reference>
<reference key="8">
    <citation type="journal article" date="2003" name="Nucleic Acids Res.">
        <title>Rpb7 subunit of RNA polymerase II interacts with an RNA-binding protein involved in processing of transcripts.</title>
        <authorList>
            <person name="Mitsuzawa H."/>
            <person name="Kanda E."/>
            <person name="Ishihama A."/>
        </authorList>
    </citation>
    <scope>INTERACTION WITH NRD1</scope>
</reference>
<reference key="9">
    <citation type="journal article" date="2003" name="Mol. Cell">
        <title>RNA polymerase II/TFIIF structure and conserved organization of the initiation complex.</title>
        <authorList>
            <person name="Chung W.H."/>
            <person name="Craighead J.L."/>
            <person name="Chang W.H."/>
            <person name="Ezeokonkwo C."/>
            <person name="Bareket-Samish A."/>
            <person name="Kornberg R.D."/>
            <person name="Asturias F.J."/>
        </authorList>
    </citation>
    <scope>ELECTRON MICROSCOPY OF THE RNA POL II/TFIIF COMPLEX</scope>
    <scope>INTERACTION WITH TFG1</scope>
</reference>
<reference key="10">
    <citation type="journal article" date="2007" name="J. Cell Biol.">
        <title>The Rpb7p subunit of yeast RNA polymerase II plays roles in the two major cytoplasmic mRNA decay mechanisms.</title>
        <authorList>
            <person name="Lotan R."/>
            <person name="Goler-Baron V."/>
            <person name="Duek L."/>
            <person name="Haimovich G."/>
            <person name="Choder M."/>
        </authorList>
    </citation>
    <scope>FUNCTION</scope>
    <scope>SUBCELLULAR LOCATION</scope>
    <scope>INTERACTION WITH PAT1</scope>
</reference>
<reference key="11">
    <citation type="journal article" date="2003" name="Cell">
        <title>Architecture of the RNA polymerase II-TFIIS complex and implications for mRNA cleavage.</title>
        <authorList>
            <person name="Kettenberger H."/>
            <person name="Armache K.J."/>
            <person name="Cramer P."/>
        </authorList>
    </citation>
    <scope>X-RAY CRYSTALLOGRAPHY (3.8 ANGSTROMS) OF THE RNA POL II COMPLEX IN COMPLEX WITH DST1</scope>
</reference>
<reference key="12">
    <citation type="journal article" date="2003" name="Proc. Natl. Acad. Sci. U.S.A.">
        <title>Architecture of initiation-competent 12-subunit RNA polymerase II.</title>
        <authorList>
            <person name="Armache K.J."/>
            <person name="Kettenberger H."/>
            <person name="Cramer P."/>
        </authorList>
    </citation>
    <scope>X-RAY CRYSTALLOGRAPHY (4.2 ANGSTROMS) OF THE RNA POL II COMPLEX</scope>
</reference>
<reference key="13">
    <citation type="journal article" date="2004" name="Mol. Cell">
        <title>Complete RNA polymerase II elongation complex structure and its interactions with NTP and TFIIS.</title>
        <authorList>
            <person name="Kettenberger H."/>
            <person name="Armache K.J."/>
            <person name="Cramer P."/>
        </authorList>
    </citation>
    <scope>X-RAY CRYSTALLOGRAPHY (4.5 ANGSTROMS) OF THE RNA POL II COMPLEX</scope>
</reference>
<reference key="14">
    <citation type="journal article" date="2005" name="J. Biol. Chem.">
        <title>Structures of complete RNA polymerase II and its subcomplex, Rpb4/7.</title>
        <authorList>
            <person name="Armache K.J."/>
            <person name="Mitterweger S."/>
            <person name="Meinhart A."/>
            <person name="Cramer P."/>
        </authorList>
    </citation>
    <scope>X-RAY CRYSTALLOGRAPHY (3.8 ANGSTROMS) OF THE RNA POL II COMPLEX</scope>
</reference>
<reference key="15">
    <citation type="journal article" date="2006" name="Nat. Struct. Mol. Biol.">
        <title>Structure of an RNA polymerase II-RNA inhibitor complex elucidates transcription regulation by noncoding RNAs.</title>
        <authorList>
            <person name="Kettenberger H."/>
            <person name="Eisenfuhr A."/>
            <person name="Brueckner F."/>
            <person name="Theis M."/>
            <person name="Famulok M."/>
            <person name="Cramer P."/>
        </authorList>
    </citation>
    <scope>X-RAY CRYSTALLOGRAPHY (3.8 ANGSTROMS) OF THE RNA POL II COMPLEX IN COMPLEX WITH INHIBITING NON-CODING RNA</scope>
</reference>
<reference key="16">
    <citation type="journal article" date="2006" name="Structure">
        <title>Phasing RNA polymerase II using intrinsically bound Zn atoms: an updated structural model.</title>
        <authorList>
            <person name="Meyer P.A."/>
            <person name="Ye P."/>
            <person name="Zhang M."/>
            <person name="Suh M.H."/>
            <person name="Fu J."/>
        </authorList>
    </citation>
    <scope>X-RAY CRYSTALLOGRAPHY (4.15 ANGSTROMS) OF THE RNA POL II COMPLEX</scope>
</reference>
<organism>
    <name type="scientific">Saccharomyces cerevisiae (strain ATCC 204508 / S288c)</name>
    <name type="common">Baker's yeast</name>
    <dbReference type="NCBI Taxonomy" id="559292"/>
    <lineage>
        <taxon>Eukaryota</taxon>
        <taxon>Fungi</taxon>
        <taxon>Dikarya</taxon>
        <taxon>Ascomycota</taxon>
        <taxon>Saccharomycotina</taxon>
        <taxon>Saccharomycetes</taxon>
        <taxon>Saccharomycetales</taxon>
        <taxon>Saccharomycetaceae</taxon>
        <taxon>Saccharomyces</taxon>
    </lineage>
</organism>
<dbReference type="EMBL" id="S59775">
    <property type="protein sequence ID" value="AAC60558.1"/>
    <property type="molecule type" value="Genomic_DNA"/>
</dbReference>
<dbReference type="EMBL" id="U32274">
    <property type="protein sequence ID" value="AAB64844.1"/>
    <property type="molecule type" value="Genomic_DNA"/>
</dbReference>
<dbReference type="EMBL" id="BK006938">
    <property type="protein sequence ID" value="DAA12246.1"/>
    <property type="molecule type" value="Genomic_DNA"/>
</dbReference>
<dbReference type="PIR" id="S30140">
    <property type="entry name" value="S30140"/>
</dbReference>
<dbReference type="RefSeq" id="NP_010692.3">
    <property type="nucleotide sequence ID" value="NM_001180712.3"/>
</dbReference>
<dbReference type="PDB" id="1NT9">
    <property type="method" value="X-ray"/>
    <property type="resolution" value="4.20 A"/>
    <property type="chains" value="G=1-171"/>
</dbReference>
<dbReference type="PDB" id="1PQV">
    <property type="method" value="X-ray"/>
    <property type="resolution" value="3.80 A"/>
    <property type="chains" value="G=1-171"/>
</dbReference>
<dbReference type="PDB" id="1WCM">
    <property type="method" value="X-ray"/>
    <property type="resolution" value="3.80 A"/>
    <property type="chains" value="G=1-171"/>
</dbReference>
<dbReference type="PDB" id="1Y14">
    <property type="method" value="X-ray"/>
    <property type="resolution" value="2.30 A"/>
    <property type="chains" value="B/D=1-171"/>
</dbReference>
<dbReference type="PDB" id="1Y1V">
    <property type="method" value="X-ray"/>
    <property type="resolution" value="3.80 A"/>
    <property type="chains" value="G=1-171"/>
</dbReference>
<dbReference type="PDB" id="1Y1W">
    <property type="method" value="X-ray"/>
    <property type="resolution" value="4.00 A"/>
    <property type="chains" value="G=1-171"/>
</dbReference>
<dbReference type="PDB" id="1Y1Y">
    <property type="method" value="X-ray"/>
    <property type="resolution" value="4.00 A"/>
    <property type="chains" value="G=1-171"/>
</dbReference>
<dbReference type="PDB" id="1Y77">
    <property type="method" value="X-ray"/>
    <property type="resolution" value="4.50 A"/>
    <property type="chains" value="G=1-171"/>
</dbReference>
<dbReference type="PDB" id="2B63">
    <property type="method" value="X-ray"/>
    <property type="resolution" value="3.80 A"/>
    <property type="chains" value="G=1-171"/>
</dbReference>
<dbReference type="PDB" id="2B8K">
    <property type="method" value="X-ray"/>
    <property type="resolution" value="4.15 A"/>
    <property type="chains" value="G=1-171"/>
</dbReference>
<dbReference type="PDB" id="2JA5">
    <property type="method" value="X-ray"/>
    <property type="resolution" value="3.80 A"/>
    <property type="chains" value="G=1-171"/>
</dbReference>
<dbReference type="PDB" id="2JA6">
    <property type="method" value="X-ray"/>
    <property type="resolution" value="4.00 A"/>
    <property type="chains" value="G=1-171"/>
</dbReference>
<dbReference type="PDB" id="2JA7">
    <property type="method" value="X-ray"/>
    <property type="resolution" value="3.80 A"/>
    <property type="chains" value="G/S=1-171"/>
</dbReference>
<dbReference type="PDB" id="2JA8">
    <property type="method" value="X-ray"/>
    <property type="resolution" value="3.80 A"/>
    <property type="chains" value="G=1-171"/>
</dbReference>
<dbReference type="PDB" id="2R7Z">
    <property type="method" value="X-ray"/>
    <property type="resolution" value="3.80 A"/>
    <property type="chains" value="G=1-171"/>
</dbReference>
<dbReference type="PDB" id="2R92">
    <property type="method" value="X-ray"/>
    <property type="resolution" value="3.80 A"/>
    <property type="chains" value="G=1-171"/>
</dbReference>
<dbReference type="PDB" id="2R93">
    <property type="method" value="X-ray"/>
    <property type="resolution" value="4.00 A"/>
    <property type="chains" value="G=1-171"/>
</dbReference>
<dbReference type="PDB" id="2VUM">
    <property type="method" value="X-ray"/>
    <property type="resolution" value="3.40 A"/>
    <property type="chains" value="G=1-171"/>
</dbReference>
<dbReference type="PDB" id="3FKI">
    <property type="method" value="X-ray"/>
    <property type="resolution" value="3.88 A"/>
    <property type="chains" value="G=1-171"/>
</dbReference>
<dbReference type="PDB" id="3H3V">
    <property type="method" value="X-ray"/>
    <property type="resolution" value="4.00 A"/>
    <property type="chains" value="H=1-171"/>
</dbReference>
<dbReference type="PDB" id="3HOU">
    <property type="method" value="X-ray"/>
    <property type="resolution" value="3.20 A"/>
    <property type="chains" value="G/S=1-171"/>
</dbReference>
<dbReference type="PDB" id="3HOV">
    <property type="method" value="X-ray"/>
    <property type="resolution" value="3.50 A"/>
    <property type="chains" value="G=1-171"/>
</dbReference>
<dbReference type="PDB" id="3HOW">
    <property type="method" value="X-ray"/>
    <property type="resolution" value="3.60 A"/>
    <property type="chains" value="G=1-171"/>
</dbReference>
<dbReference type="PDB" id="3HOX">
    <property type="method" value="X-ray"/>
    <property type="resolution" value="3.65 A"/>
    <property type="chains" value="G=1-171"/>
</dbReference>
<dbReference type="PDB" id="3HOY">
    <property type="method" value="X-ray"/>
    <property type="resolution" value="3.40 A"/>
    <property type="chains" value="G=1-171"/>
</dbReference>
<dbReference type="PDB" id="3HOZ">
    <property type="method" value="X-ray"/>
    <property type="resolution" value="3.65 A"/>
    <property type="chains" value="G=1-171"/>
</dbReference>
<dbReference type="PDB" id="3I4M">
    <property type="method" value="X-ray"/>
    <property type="resolution" value="3.70 A"/>
    <property type="chains" value="G=1-171"/>
</dbReference>
<dbReference type="PDB" id="3I4N">
    <property type="method" value="X-ray"/>
    <property type="resolution" value="3.90 A"/>
    <property type="chains" value="G=1-171"/>
</dbReference>
<dbReference type="PDB" id="3J0K">
    <property type="method" value="EM"/>
    <property type="resolution" value="36.00 A"/>
    <property type="chains" value="G=1-171"/>
</dbReference>
<dbReference type="PDB" id="3J1N">
    <property type="method" value="EM"/>
    <property type="resolution" value="16.00 A"/>
    <property type="chains" value="G=1-171"/>
</dbReference>
<dbReference type="PDB" id="3K1F">
    <property type="method" value="X-ray"/>
    <property type="resolution" value="4.30 A"/>
    <property type="chains" value="G=1-171"/>
</dbReference>
<dbReference type="PDB" id="3PO2">
    <property type="method" value="X-ray"/>
    <property type="resolution" value="3.30 A"/>
    <property type="chains" value="G=1-171"/>
</dbReference>
<dbReference type="PDB" id="3PO3">
    <property type="method" value="X-ray"/>
    <property type="resolution" value="3.30 A"/>
    <property type="chains" value="G=1-171"/>
</dbReference>
<dbReference type="PDB" id="3QT1">
    <property type="method" value="X-ray"/>
    <property type="resolution" value="4.30 A"/>
    <property type="chains" value="G=1-171"/>
</dbReference>
<dbReference type="PDB" id="4A3B">
    <property type="method" value="X-ray"/>
    <property type="resolution" value="3.50 A"/>
    <property type="chains" value="G=1-171"/>
</dbReference>
<dbReference type="PDB" id="4A3C">
    <property type="method" value="X-ray"/>
    <property type="resolution" value="3.50 A"/>
    <property type="chains" value="G=1-171"/>
</dbReference>
<dbReference type="PDB" id="4A3D">
    <property type="method" value="X-ray"/>
    <property type="resolution" value="3.40 A"/>
    <property type="chains" value="G=1-171"/>
</dbReference>
<dbReference type="PDB" id="4A3E">
    <property type="method" value="X-ray"/>
    <property type="resolution" value="3.40 A"/>
    <property type="chains" value="G=1-171"/>
</dbReference>
<dbReference type="PDB" id="4A3F">
    <property type="method" value="X-ray"/>
    <property type="resolution" value="3.50 A"/>
    <property type="chains" value="G=1-171"/>
</dbReference>
<dbReference type="PDB" id="4A3G">
    <property type="method" value="X-ray"/>
    <property type="resolution" value="3.50 A"/>
    <property type="chains" value="G=1-171"/>
</dbReference>
<dbReference type="PDB" id="4A3I">
    <property type="method" value="X-ray"/>
    <property type="resolution" value="3.80 A"/>
    <property type="chains" value="G=1-171"/>
</dbReference>
<dbReference type="PDB" id="4A3J">
    <property type="method" value="X-ray"/>
    <property type="resolution" value="3.70 A"/>
    <property type="chains" value="G=1-171"/>
</dbReference>
<dbReference type="PDB" id="4A3K">
    <property type="method" value="X-ray"/>
    <property type="resolution" value="3.50 A"/>
    <property type="chains" value="G=1-171"/>
</dbReference>
<dbReference type="PDB" id="4A3L">
    <property type="method" value="X-ray"/>
    <property type="resolution" value="3.50 A"/>
    <property type="chains" value="G=1-171"/>
</dbReference>
<dbReference type="PDB" id="4A3M">
    <property type="method" value="X-ray"/>
    <property type="resolution" value="3.90 A"/>
    <property type="chains" value="G=1-171"/>
</dbReference>
<dbReference type="PDB" id="4A93">
    <property type="method" value="X-ray"/>
    <property type="resolution" value="3.40 A"/>
    <property type="chains" value="G=1-171"/>
</dbReference>
<dbReference type="PDB" id="4BBR">
    <property type="method" value="X-ray"/>
    <property type="resolution" value="3.40 A"/>
    <property type="chains" value="G=1-171"/>
</dbReference>
<dbReference type="PDB" id="4BBS">
    <property type="method" value="X-ray"/>
    <property type="resolution" value="3.60 A"/>
    <property type="chains" value="G=1-171"/>
</dbReference>
<dbReference type="PDB" id="4BXX">
    <property type="method" value="X-ray"/>
    <property type="resolution" value="3.28 A"/>
    <property type="chains" value="G=1-171"/>
</dbReference>
<dbReference type="PDB" id="4BXZ">
    <property type="method" value="X-ray"/>
    <property type="resolution" value="4.80 A"/>
    <property type="chains" value="G=1-171"/>
</dbReference>
<dbReference type="PDB" id="4BY1">
    <property type="method" value="X-ray"/>
    <property type="resolution" value="3.60 A"/>
    <property type="chains" value="G=1-171"/>
</dbReference>
<dbReference type="PDB" id="4BY7">
    <property type="method" value="X-ray"/>
    <property type="resolution" value="3.15 A"/>
    <property type="chains" value="G=1-171"/>
</dbReference>
<dbReference type="PDB" id="4V1N">
    <property type="method" value="EM"/>
    <property type="resolution" value="7.80 A"/>
    <property type="chains" value="G=1-171"/>
</dbReference>
<dbReference type="PDB" id="4V1O">
    <property type="method" value="EM"/>
    <property type="resolution" value="9.70 A"/>
    <property type="chains" value="G=1-171"/>
</dbReference>
<dbReference type="PDB" id="5C3E">
    <property type="method" value="X-ray"/>
    <property type="resolution" value="3.70 A"/>
    <property type="chains" value="G=1-171"/>
</dbReference>
<dbReference type="PDB" id="5C44">
    <property type="method" value="X-ray"/>
    <property type="resolution" value="3.95 A"/>
    <property type="chains" value="G=1-171"/>
</dbReference>
<dbReference type="PDB" id="5C4A">
    <property type="method" value="X-ray"/>
    <property type="resolution" value="4.20 A"/>
    <property type="chains" value="G=1-171"/>
</dbReference>
<dbReference type="PDB" id="5C4X">
    <property type="method" value="X-ray"/>
    <property type="resolution" value="4.00 A"/>
    <property type="chains" value="G=1-171"/>
</dbReference>
<dbReference type="PDB" id="5FMF">
    <property type="method" value="EM"/>
    <property type="resolution" value="6.00 A"/>
    <property type="chains" value="G=1-171"/>
</dbReference>
<dbReference type="PDB" id="5FYW">
    <property type="method" value="EM"/>
    <property type="resolution" value="4.35 A"/>
    <property type="chains" value="G=1-171"/>
</dbReference>
<dbReference type="PDB" id="5FZ5">
    <property type="method" value="EM"/>
    <property type="resolution" value="8.80 A"/>
    <property type="chains" value="G=1-171"/>
</dbReference>
<dbReference type="PDB" id="5IP7">
    <property type="method" value="X-ray"/>
    <property type="resolution" value="3.52 A"/>
    <property type="chains" value="G=1-171"/>
</dbReference>
<dbReference type="PDB" id="5IP9">
    <property type="method" value="X-ray"/>
    <property type="resolution" value="3.90 A"/>
    <property type="chains" value="G=1-171"/>
</dbReference>
<dbReference type="PDB" id="5OQJ">
    <property type="method" value="EM"/>
    <property type="resolution" value="4.70 A"/>
    <property type="chains" value="G=1-171"/>
</dbReference>
<dbReference type="PDB" id="5OQM">
    <property type="method" value="EM"/>
    <property type="resolution" value="5.80 A"/>
    <property type="chains" value="G=1-171"/>
</dbReference>
<dbReference type="PDB" id="5OT2">
    <property type="method" value="X-ray"/>
    <property type="resolution" value="3.20 A"/>
    <property type="chains" value="G=1-171"/>
</dbReference>
<dbReference type="PDB" id="5SVA">
    <property type="method" value="EM"/>
    <property type="resolution" value="15.30 A"/>
    <property type="chains" value="G=1-171"/>
</dbReference>
<dbReference type="PDB" id="5U5Q">
    <property type="method" value="X-ray"/>
    <property type="resolution" value="3.80 A"/>
    <property type="chains" value="G=1-171"/>
</dbReference>
<dbReference type="PDB" id="5VVR">
    <property type="method" value="EM"/>
    <property type="resolution" value="5.80 A"/>
    <property type="chains" value="G=1-171"/>
</dbReference>
<dbReference type="PDB" id="5VVS">
    <property type="method" value="EM"/>
    <property type="resolution" value="6.40 A"/>
    <property type="chains" value="G=1-171"/>
</dbReference>
<dbReference type="PDB" id="6GYK">
    <property type="method" value="EM"/>
    <property type="resolution" value="5.10 A"/>
    <property type="chains" value="G=1-171"/>
</dbReference>
<dbReference type="PDB" id="6GYL">
    <property type="method" value="EM"/>
    <property type="resolution" value="4.80 A"/>
    <property type="chains" value="G=1-171"/>
</dbReference>
<dbReference type="PDB" id="6GYM">
    <property type="method" value="EM"/>
    <property type="resolution" value="6.70 A"/>
    <property type="chains" value="G=1-171"/>
</dbReference>
<dbReference type="PDB" id="6I84">
    <property type="method" value="EM"/>
    <property type="resolution" value="4.40 A"/>
    <property type="chains" value="G=1-171"/>
</dbReference>
<dbReference type="PDB" id="7MEI">
    <property type="method" value="EM"/>
    <property type="resolution" value="3.54 A"/>
    <property type="chains" value="G/g=1-171"/>
</dbReference>
<dbReference type="PDB" id="7MK9">
    <property type="method" value="EM"/>
    <property type="resolution" value="3.54 A"/>
    <property type="chains" value="G=1-171"/>
</dbReference>
<dbReference type="PDB" id="7MKA">
    <property type="method" value="EM"/>
    <property type="resolution" value="3.54 A"/>
    <property type="chains" value="g=1-171"/>
</dbReference>
<dbReference type="PDB" id="7ML0">
    <property type="method" value="EM"/>
    <property type="resolution" value="3.00 A"/>
    <property type="chains" value="G=1-171"/>
</dbReference>
<dbReference type="PDB" id="7ML1">
    <property type="method" value="EM"/>
    <property type="resolution" value="4.00 A"/>
    <property type="chains" value="G=1-171"/>
</dbReference>
<dbReference type="PDB" id="7ML2">
    <property type="method" value="EM"/>
    <property type="resolution" value="3.40 A"/>
    <property type="chains" value="G=1-171"/>
</dbReference>
<dbReference type="PDB" id="7ML4">
    <property type="method" value="EM"/>
    <property type="resolution" value="3.10 A"/>
    <property type="chains" value="G=1-171"/>
</dbReference>
<dbReference type="PDB" id="7NKX">
    <property type="method" value="EM"/>
    <property type="resolution" value="2.90 A"/>
    <property type="chains" value="G=1-171"/>
</dbReference>
<dbReference type="PDB" id="7NKY">
    <property type="method" value="EM"/>
    <property type="resolution" value="3.20 A"/>
    <property type="chains" value="G=1-171"/>
</dbReference>
<dbReference type="PDB" id="7O4I">
    <property type="method" value="EM"/>
    <property type="resolution" value="3.20 A"/>
    <property type="chains" value="G=1-171"/>
</dbReference>
<dbReference type="PDB" id="7O4J">
    <property type="method" value="EM"/>
    <property type="resolution" value="2.90 A"/>
    <property type="chains" value="G=1-171"/>
</dbReference>
<dbReference type="PDB" id="7O4K">
    <property type="method" value="EM"/>
    <property type="resolution" value="3.60 A"/>
    <property type="chains" value="G=1-171"/>
</dbReference>
<dbReference type="PDB" id="7O4L">
    <property type="method" value="EM"/>
    <property type="resolution" value="3.40 A"/>
    <property type="chains" value="G=1-171"/>
</dbReference>
<dbReference type="PDB" id="7O72">
    <property type="method" value="EM"/>
    <property type="resolution" value="3.40 A"/>
    <property type="chains" value="G=1-171"/>
</dbReference>
<dbReference type="PDB" id="7O73">
    <property type="method" value="EM"/>
    <property type="resolution" value="3.40 A"/>
    <property type="chains" value="G=1-171"/>
</dbReference>
<dbReference type="PDB" id="7O75">
    <property type="method" value="EM"/>
    <property type="resolution" value="3.20 A"/>
    <property type="chains" value="G=1-171"/>
</dbReference>
<dbReference type="PDB" id="7UI9">
    <property type="method" value="EM"/>
    <property type="resolution" value="3.30 A"/>
    <property type="chains" value="G=1-171"/>
</dbReference>
<dbReference type="PDB" id="7UIF">
    <property type="method" value="EM"/>
    <property type="resolution" value="4.60 A"/>
    <property type="chains" value="G=1-171"/>
</dbReference>
<dbReference type="PDB" id="7UIO">
    <property type="method" value="EM"/>
    <property type="resolution" value="3.30 A"/>
    <property type="chains" value="AG/BG=1-171"/>
</dbReference>
<dbReference type="PDB" id="7ZS9">
    <property type="method" value="EM"/>
    <property type="resolution" value="3.10 A"/>
    <property type="chains" value="G=1-171"/>
</dbReference>
<dbReference type="PDB" id="7ZSA">
    <property type="method" value="EM"/>
    <property type="resolution" value="4.00 A"/>
    <property type="chains" value="G=1-171"/>
</dbReference>
<dbReference type="PDB" id="7ZSB">
    <property type="method" value="EM"/>
    <property type="resolution" value="6.60 A"/>
    <property type="chains" value="G=1-171"/>
</dbReference>
<dbReference type="PDB" id="8CEN">
    <property type="method" value="EM"/>
    <property type="resolution" value="3.00 A"/>
    <property type="chains" value="G=1-171"/>
</dbReference>
<dbReference type="PDB" id="8CEO">
    <property type="method" value="EM"/>
    <property type="resolution" value="3.60 A"/>
    <property type="chains" value="G=1-171"/>
</dbReference>
<dbReference type="PDB" id="8JCH">
    <property type="method" value="EM"/>
    <property type="resolution" value="2.70 A"/>
    <property type="chains" value="G=1-171"/>
</dbReference>
<dbReference type="PDB" id="8K5P">
    <property type="method" value="EM"/>
    <property type="resolution" value="2.80 A"/>
    <property type="chains" value="G=1-171"/>
</dbReference>
<dbReference type="PDB" id="8RAM">
    <property type="method" value="EM"/>
    <property type="resolution" value="2.80 A"/>
    <property type="chains" value="G=1-171"/>
</dbReference>
<dbReference type="PDB" id="8RAP">
    <property type="method" value="EM"/>
    <property type="resolution" value="4.30 A"/>
    <property type="chains" value="G=1-171"/>
</dbReference>
<dbReference type="PDB" id="8TUG">
    <property type="method" value="EM"/>
    <property type="resolution" value="3.50 A"/>
    <property type="chains" value="G=1-171"/>
</dbReference>
<dbReference type="PDB" id="8TVP">
    <property type="method" value="EM"/>
    <property type="resolution" value="3.70 A"/>
    <property type="chains" value="G=1-171"/>
</dbReference>
<dbReference type="PDB" id="8TVS">
    <property type="method" value="EM"/>
    <property type="resolution" value="4.40 A"/>
    <property type="chains" value="G=1-171"/>
</dbReference>
<dbReference type="PDB" id="8TVV">
    <property type="method" value="EM"/>
    <property type="resolution" value="3.70 A"/>
    <property type="chains" value="G=1-171"/>
</dbReference>
<dbReference type="PDB" id="8TVW">
    <property type="method" value="EM"/>
    <property type="resolution" value="3.60 A"/>
    <property type="chains" value="G=1-171"/>
</dbReference>
<dbReference type="PDB" id="8TVX">
    <property type="method" value="EM"/>
    <property type="resolution" value="3.70 A"/>
    <property type="chains" value="G=1-171"/>
</dbReference>
<dbReference type="PDB" id="8TVY">
    <property type="method" value="EM"/>
    <property type="resolution" value="3.10 A"/>
    <property type="chains" value="G=1-171"/>
</dbReference>
<dbReference type="PDB" id="8UMH">
    <property type="method" value="EM"/>
    <property type="resolution" value="4.10 A"/>
    <property type="chains" value="G=1-171"/>
</dbReference>
<dbReference type="PDB" id="8UMI">
    <property type="method" value="EM"/>
    <property type="resolution" value="3.70 A"/>
    <property type="chains" value="G=1-171"/>
</dbReference>
<dbReference type="PDB" id="8UOQ">
    <property type="method" value="EM"/>
    <property type="resolution" value="3.80 A"/>
    <property type="chains" value="G=1-171"/>
</dbReference>
<dbReference type="PDB" id="8UOT">
    <property type="method" value="EM"/>
    <property type="resolution" value="3.70 A"/>
    <property type="chains" value="G=1-171"/>
</dbReference>
<dbReference type="PDB" id="9BVT">
    <property type="method" value="X-ray"/>
    <property type="resolution" value="3.40 A"/>
    <property type="chains" value="G=1-171"/>
</dbReference>
<dbReference type="PDB" id="9BW0">
    <property type="method" value="X-ray"/>
    <property type="resolution" value="3.51 A"/>
    <property type="chains" value="G=1-171"/>
</dbReference>
<dbReference type="PDB" id="9JA1">
    <property type="method" value="EM"/>
    <property type="resolution" value="2.98 A"/>
    <property type="chains" value="G=1-171"/>
</dbReference>
<dbReference type="PDBsum" id="1NT9"/>
<dbReference type="PDBsum" id="1PQV"/>
<dbReference type="PDBsum" id="1WCM"/>
<dbReference type="PDBsum" id="1Y14"/>
<dbReference type="PDBsum" id="1Y1V"/>
<dbReference type="PDBsum" id="1Y1W"/>
<dbReference type="PDBsum" id="1Y1Y"/>
<dbReference type="PDBsum" id="1Y77"/>
<dbReference type="PDBsum" id="2B63"/>
<dbReference type="PDBsum" id="2B8K"/>
<dbReference type="PDBsum" id="2JA5"/>
<dbReference type="PDBsum" id="2JA6"/>
<dbReference type="PDBsum" id="2JA7"/>
<dbReference type="PDBsum" id="2JA8"/>
<dbReference type="PDBsum" id="2R7Z"/>
<dbReference type="PDBsum" id="2R92"/>
<dbReference type="PDBsum" id="2R93"/>
<dbReference type="PDBsum" id="2VUM"/>
<dbReference type="PDBsum" id="3FKI"/>
<dbReference type="PDBsum" id="3H3V"/>
<dbReference type="PDBsum" id="3HOU"/>
<dbReference type="PDBsum" id="3HOV"/>
<dbReference type="PDBsum" id="3HOW"/>
<dbReference type="PDBsum" id="3HOX"/>
<dbReference type="PDBsum" id="3HOY"/>
<dbReference type="PDBsum" id="3HOZ"/>
<dbReference type="PDBsum" id="3I4M"/>
<dbReference type="PDBsum" id="3I4N"/>
<dbReference type="PDBsum" id="3J0K"/>
<dbReference type="PDBsum" id="3J1N"/>
<dbReference type="PDBsum" id="3K1F"/>
<dbReference type="PDBsum" id="3PO2"/>
<dbReference type="PDBsum" id="3PO3"/>
<dbReference type="PDBsum" id="3QT1"/>
<dbReference type="PDBsum" id="4A3B"/>
<dbReference type="PDBsum" id="4A3C"/>
<dbReference type="PDBsum" id="4A3D"/>
<dbReference type="PDBsum" id="4A3E"/>
<dbReference type="PDBsum" id="4A3F"/>
<dbReference type="PDBsum" id="4A3G"/>
<dbReference type="PDBsum" id="4A3I"/>
<dbReference type="PDBsum" id="4A3J"/>
<dbReference type="PDBsum" id="4A3K"/>
<dbReference type="PDBsum" id="4A3L"/>
<dbReference type="PDBsum" id="4A3M"/>
<dbReference type="PDBsum" id="4A93"/>
<dbReference type="PDBsum" id="4BBR"/>
<dbReference type="PDBsum" id="4BBS"/>
<dbReference type="PDBsum" id="4BXX"/>
<dbReference type="PDBsum" id="4BXZ"/>
<dbReference type="PDBsum" id="4BY1"/>
<dbReference type="PDBsum" id="4BY7"/>
<dbReference type="PDBsum" id="4V1N"/>
<dbReference type="PDBsum" id="4V1O"/>
<dbReference type="PDBsum" id="5C3E"/>
<dbReference type="PDBsum" id="5C44"/>
<dbReference type="PDBsum" id="5C4A"/>
<dbReference type="PDBsum" id="5C4X"/>
<dbReference type="PDBsum" id="5FMF"/>
<dbReference type="PDBsum" id="5FYW"/>
<dbReference type="PDBsum" id="5FZ5"/>
<dbReference type="PDBsum" id="5IP7"/>
<dbReference type="PDBsum" id="5IP9"/>
<dbReference type="PDBsum" id="5OQJ"/>
<dbReference type="PDBsum" id="5OQM"/>
<dbReference type="PDBsum" id="5OT2"/>
<dbReference type="PDBsum" id="5SVA"/>
<dbReference type="PDBsum" id="5U5Q"/>
<dbReference type="PDBsum" id="5VVR"/>
<dbReference type="PDBsum" id="5VVS"/>
<dbReference type="PDBsum" id="6GYK"/>
<dbReference type="PDBsum" id="6GYL"/>
<dbReference type="PDBsum" id="6GYM"/>
<dbReference type="PDBsum" id="6I84"/>
<dbReference type="PDBsum" id="7MEI"/>
<dbReference type="PDBsum" id="7MK9"/>
<dbReference type="PDBsum" id="7MKA"/>
<dbReference type="PDBsum" id="7ML0"/>
<dbReference type="PDBsum" id="7ML1"/>
<dbReference type="PDBsum" id="7ML2"/>
<dbReference type="PDBsum" id="7ML4"/>
<dbReference type="PDBsum" id="7NKX"/>
<dbReference type="PDBsum" id="7NKY"/>
<dbReference type="PDBsum" id="7O4I"/>
<dbReference type="PDBsum" id="7O4J"/>
<dbReference type="PDBsum" id="7O4K"/>
<dbReference type="PDBsum" id="7O4L"/>
<dbReference type="PDBsum" id="7O72"/>
<dbReference type="PDBsum" id="7O73"/>
<dbReference type="PDBsum" id="7O75"/>
<dbReference type="PDBsum" id="7UI9"/>
<dbReference type="PDBsum" id="7UIF"/>
<dbReference type="PDBsum" id="7UIO"/>
<dbReference type="PDBsum" id="7ZS9"/>
<dbReference type="PDBsum" id="7ZSA"/>
<dbReference type="PDBsum" id="7ZSB"/>
<dbReference type="PDBsum" id="8CEN"/>
<dbReference type="PDBsum" id="8CEO"/>
<dbReference type="PDBsum" id="8JCH"/>
<dbReference type="PDBsum" id="8K5P"/>
<dbReference type="PDBsum" id="8RAM"/>
<dbReference type="PDBsum" id="8RAP"/>
<dbReference type="PDBsum" id="8TUG"/>
<dbReference type="PDBsum" id="8TVP"/>
<dbReference type="PDBsum" id="8TVS"/>
<dbReference type="PDBsum" id="8TVV"/>
<dbReference type="PDBsum" id="8TVW"/>
<dbReference type="PDBsum" id="8TVX"/>
<dbReference type="PDBsum" id="8TVY"/>
<dbReference type="PDBsum" id="8UMH"/>
<dbReference type="PDBsum" id="8UMI"/>
<dbReference type="PDBsum" id="8UOQ"/>
<dbReference type="PDBsum" id="8UOT"/>
<dbReference type="PDBsum" id="9BVT"/>
<dbReference type="PDBsum" id="9BW0"/>
<dbReference type="PDBsum" id="9JA1"/>
<dbReference type="EMDB" id="EMD-0090"/>
<dbReference type="EMDB" id="EMD-0091"/>
<dbReference type="EMDB" id="EMD-0092"/>
<dbReference type="EMDB" id="EMD-12449"/>
<dbReference type="EMDB" id="EMD-12450"/>
<dbReference type="EMDB" id="EMD-12719"/>
<dbReference type="EMDB" id="EMD-12720"/>
<dbReference type="EMDB" id="EMD-12721"/>
<dbReference type="EMDB" id="EMD-12722"/>
<dbReference type="EMDB" id="EMD-12743"/>
<dbReference type="EMDB" id="EMD-12744"/>
<dbReference type="EMDB" id="EMD-12745"/>
<dbReference type="EMDB" id="EMD-14927"/>
<dbReference type="EMDB" id="EMD-14928"/>
<dbReference type="EMDB" id="EMD-14929"/>
<dbReference type="EMDB" id="EMD-16610"/>
<dbReference type="EMDB" id="EMD-16611"/>
<dbReference type="EMDB" id="EMD-19019"/>
<dbReference type="EMDB" id="EMD-19022"/>
<dbReference type="EMDB" id="EMD-26542"/>
<dbReference type="EMDB" id="EMD-26544"/>
<dbReference type="EMDB" id="EMD-26551"/>
<dbReference type="EMDB" id="EMD-2784"/>
<dbReference type="EMDB" id="EMD-2785"/>
<dbReference type="EMDB" id="EMD-2786"/>
<dbReference type="EMDB" id="EMD-36162"/>
<dbReference type="EMDB" id="EMD-36908"/>
<dbReference type="EMDB" id="EMD-3846"/>
<dbReference type="EMDB" id="EMD-3850"/>
<dbReference type="EMDB" id="EMD-42437"/>
<dbReference type="EMDB" id="EMD-42438"/>
<dbReference type="EMDB" id="EMD-4429"/>
<dbReference type="EMDB" id="EMD-61287"/>
<dbReference type="EMDB" id="EMD-8305"/>
<dbReference type="EMDB" id="EMD-8735"/>
<dbReference type="EMDB" id="EMD-8737"/>
<dbReference type="SMR" id="P34087"/>
<dbReference type="BioGRID" id="32464">
    <property type="interactions" value="379"/>
</dbReference>
<dbReference type="ComplexPortal" id="CPX-1891">
    <property type="entry name" value="RPB4-RPB7 subcomplex"/>
</dbReference>
<dbReference type="ComplexPortal" id="CPX-2662">
    <property type="entry name" value="DNA-directed RNA polymerase II complex"/>
</dbReference>
<dbReference type="DIP" id="DIP-725N"/>
<dbReference type="FunCoup" id="P34087">
    <property type="interactions" value="1275"/>
</dbReference>
<dbReference type="IntAct" id="P34087">
    <property type="interactions" value="47"/>
</dbReference>
<dbReference type="MINT" id="P34087"/>
<dbReference type="STRING" id="4932.YDR404C"/>
<dbReference type="iPTMnet" id="P34087"/>
<dbReference type="PaxDb" id="4932-YDR404C"/>
<dbReference type="PeptideAtlas" id="P34087"/>
<dbReference type="EnsemblFungi" id="YDR404C_mRNA">
    <property type="protein sequence ID" value="YDR404C"/>
    <property type="gene ID" value="YDR404C"/>
</dbReference>
<dbReference type="GeneID" id="852013"/>
<dbReference type="KEGG" id="sce:YDR404C"/>
<dbReference type="AGR" id="SGD:S000002812"/>
<dbReference type="SGD" id="S000002812">
    <property type="gene designation" value="RPB7"/>
</dbReference>
<dbReference type="VEuPathDB" id="FungiDB:YDR404C"/>
<dbReference type="eggNOG" id="KOG3298">
    <property type="taxonomic scope" value="Eukaryota"/>
</dbReference>
<dbReference type="GeneTree" id="ENSGT00390000008975"/>
<dbReference type="HOGENOM" id="CLU_085878_2_0_1"/>
<dbReference type="InParanoid" id="P34087"/>
<dbReference type="OMA" id="TMRQPGL"/>
<dbReference type="OrthoDB" id="1162399at2759"/>
<dbReference type="BioCyc" id="YEAST:G3O-29948-MONOMER"/>
<dbReference type="Reactome" id="R-SCE-113418">
    <property type="pathway name" value="Formation of the Early Elongation Complex"/>
</dbReference>
<dbReference type="Reactome" id="R-SCE-674695">
    <property type="pathway name" value="RNA Polymerase II Pre-transcription Events"/>
</dbReference>
<dbReference type="Reactome" id="R-SCE-6781823">
    <property type="pathway name" value="Formation of TC-NER Pre-Incision Complex"/>
</dbReference>
<dbReference type="Reactome" id="R-SCE-6782135">
    <property type="pathway name" value="Dual incision in TC-NER"/>
</dbReference>
<dbReference type="Reactome" id="R-SCE-6782210">
    <property type="pathway name" value="Gap-filling DNA repair synthesis and ligation in TC-NER"/>
</dbReference>
<dbReference type="Reactome" id="R-SCE-6796648">
    <property type="pathway name" value="TP53 Regulates Transcription of DNA Repair Genes"/>
</dbReference>
<dbReference type="Reactome" id="R-SCE-6807505">
    <property type="pathway name" value="RNA polymerase II transcribes snRNA genes"/>
</dbReference>
<dbReference type="Reactome" id="R-SCE-72086">
    <property type="pathway name" value="mRNA Capping"/>
</dbReference>
<dbReference type="Reactome" id="R-SCE-72203">
    <property type="pathway name" value="Processing of Capped Intron-Containing Pre-mRNA"/>
</dbReference>
<dbReference type="Reactome" id="R-SCE-73776">
    <property type="pathway name" value="RNA Polymerase II Promoter Escape"/>
</dbReference>
<dbReference type="Reactome" id="R-SCE-73779">
    <property type="pathway name" value="RNA Polymerase II Transcription Pre-Initiation And Promoter Opening"/>
</dbReference>
<dbReference type="Reactome" id="R-SCE-75953">
    <property type="pathway name" value="RNA Polymerase II Transcription Initiation"/>
</dbReference>
<dbReference type="Reactome" id="R-SCE-76042">
    <property type="pathway name" value="RNA Polymerase II Transcription Initiation And Promoter Clearance"/>
</dbReference>
<dbReference type="Reactome" id="R-SCE-77075">
    <property type="pathway name" value="RNA Pol II CTD phosphorylation and interaction with CE"/>
</dbReference>
<dbReference type="Reactome" id="R-SCE-9018519">
    <property type="pathway name" value="Estrogen-dependent gene expression"/>
</dbReference>
<dbReference type="BioGRID-ORCS" id="852013">
    <property type="hits" value="2 hits in 10 CRISPR screens"/>
</dbReference>
<dbReference type="CD-CODE" id="A777E0F8">
    <property type="entry name" value="P-body"/>
</dbReference>
<dbReference type="EvolutionaryTrace" id="P34087"/>
<dbReference type="PRO" id="PR:P34087"/>
<dbReference type="Proteomes" id="UP000002311">
    <property type="component" value="Chromosome IV"/>
</dbReference>
<dbReference type="RNAct" id="P34087">
    <property type="molecule type" value="protein"/>
</dbReference>
<dbReference type="GO" id="GO:0005737">
    <property type="term" value="C:cytoplasm"/>
    <property type="evidence" value="ECO:0000314"/>
    <property type="project" value="SGD"/>
</dbReference>
<dbReference type="GO" id="GO:0005634">
    <property type="term" value="C:nucleus"/>
    <property type="evidence" value="ECO:0000314"/>
    <property type="project" value="SGD"/>
</dbReference>
<dbReference type="GO" id="GO:0000932">
    <property type="term" value="C:P-body"/>
    <property type="evidence" value="ECO:0000314"/>
    <property type="project" value="SGD"/>
</dbReference>
<dbReference type="GO" id="GO:0005665">
    <property type="term" value="C:RNA polymerase II, core complex"/>
    <property type="evidence" value="ECO:0000314"/>
    <property type="project" value="SGD"/>
</dbReference>
<dbReference type="GO" id="GO:1990328">
    <property type="term" value="C:RPB4-RPB7 complex"/>
    <property type="evidence" value="ECO:0000353"/>
    <property type="project" value="ComplexPortal"/>
</dbReference>
<dbReference type="GO" id="GO:0003697">
    <property type="term" value="F:single-stranded DNA binding"/>
    <property type="evidence" value="ECO:0000314"/>
    <property type="project" value="SGD"/>
</dbReference>
<dbReference type="GO" id="GO:0003727">
    <property type="term" value="F:single-stranded RNA binding"/>
    <property type="evidence" value="ECO:0000314"/>
    <property type="project" value="SGD"/>
</dbReference>
<dbReference type="GO" id="GO:0031369">
    <property type="term" value="F:translation initiation factor binding"/>
    <property type="evidence" value="ECO:0000353"/>
    <property type="project" value="SGD"/>
</dbReference>
<dbReference type="GO" id="GO:0006352">
    <property type="term" value="P:DNA-templated transcription initiation"/>
    <property type="evidence" value="ECO:0000303"/>
    <property type="project" value="ComplexPortal"/>
</dbReference>
<dbReference type="GO" id="GO:0000956">
    <property type="term" value="P:nuclear-transcribed mRNA catabolic process"/>
    <property type="evidence" value="ECO:0000316"/>
    <property type="project" value="SGD"/>
</dbReference>
<dbReference type="GO" id="GO:0000288">
    <property type="term" value="P:nuclear-transcribed mRNA catabolic process, deadenylation-dependent decay"/>
    <property type="evidence" value="ECO:0000303"/>
    <property type="project" value="ComplexPortal"/>
</dbReference>
<dbReference type="GO" id="GO:0060213">
    <property type="term" value="P:positive regulation of nuclear-transcribed mRNA poly(A) tail shortening"/>
    <property type="evidence" value="ECO:0000315"/>
    <property type="project" value="SGD"/>
</dbReference>
<dbReference type="GO" id="GO:0045948">
    <property type="term" value="P:positive regulation of translational initiation"/>
    <property type="evidence" value="ECO:0000315"/>
    <property type="project" value="SGD"/>
</dbReference>
<dbReference type="GO" id="GO:0001172">
    <property type="term" value="P:RNA-templated transcription"/>
    <property type="evidence" value="ECO:0007669"/>
    <property type="project" value="GOC"/>
</dbReference>
<dbReference type="GO" id="GO:0006366">
    <property type="term" value="P:transcription by RNA polymerase II"/>
    <property type="evidence" value="ECO:0000316"/>
    <property type="project" value="SGD"/>
</dbReference>
<dbReference type="GO" id="GO:0006368">
    <property type="term" value="P:transcription elongation by RNA polymerase II"/>
    <property type="evidence" value="ECO:0000314"/>
    <property type="project" value="ComplexPortal"/>
</dbReference>
<dbReference type="GO" id="GO:0006367">
    <property type="term" value="P:transcription initiation at RNA polymerase II promoter"/>
    <property type="evidence" value="ECO:0000314"/>
    <property type="project" value="SGD"/>
</dbReference>
<dbReference type="CDD" id="cd04329">
    <property type="entry name" value="RNAP_II_Rpb7_N"/>
    <property type="match status" value="1"/>
</dbReference>
<dbReference type="CDD" id="cd04462">
    <property type="entry name" value="S1_RNAPII_Rpb7"/>
    <property type="match status" value="1"/>
</dbReference>
<dbReference type="DisProt" id="DP01187"/>
<dbReference type="FunFam" id="2.40.50.140:FF:000043">
    <property type="entry name" value="DNA-directed RNA polymerase II subunit RPB7"/>
    <property type="match status" value="1"/>
</dbReference>
<dbReference type="FunFam" id="3.30.1490.120:FF:000001">
    <property type="entry name" value="DNA-directed RNA polymerase II subunit RPB7"/>
    <property type="match status" value="1"/>
</dbReference>
<dbReference type="Gene3D" id="2.40.50.140">
    <property type="entry name" value="Nucleic acid-binding proteins"/>
    <property type="match status" value="1"/>
</dbReference>
<dbReference type="Gene3D" id="3.30.1490.120">
    <property type="entry name" value="RNA polymerase Rpb7-like, N-terminal domain"/>
    <property type="match status" value="1"/>
</dbReference>
<dbReference type="InterPro" id="IPR012340">
    <property type="entry name" value="NA-bd_OB-fold"/>
</dbReference>
<dbReference type="InterPro" id="IPR036898">
    <property type="entry name" value="RNA_pol_Rpb7-like_N_sf"/>
</dbReference>
<dbReference type="InterPro" id="IPR045113">
    <property type="entry name" value="Rpb7-like"/>
</dbReference>
<dbReference type="InterPro" id="IPR005576">
    <property type="entry name" value="Rpb7-like_N"/>
</dbReference>
<dbReference type="InterPro" id="IPR003029">
    <property type="entry name" value="S1_domain"/>
</dbReference>
<dbReference type="PANTHER" id="PTHR12709:SF4">
    <property type="entry name" value="DNA-DIRECTED RNA POLYMERASE II SUBUNIT RPB7"/>
    <property type="match status" value="1"/>
</dbReference>
<dbReference type="PANTHER" id="PTHR12709">
    <property type="entry name" value="DNA-DIRECTED RNA POLYMERASE II, III"/>
    <property type="match status" value="1"/>
</dbReference>
<dbReference type="Pfam" id="PF00575">
    <property type="entry name" value="S1"/>
    <property type="match status" value="1"/>
</dbReference>
<dbReference type="Pfam" id="PF03876">
    <property type="entry name" value="SHS2_Rpb7-N"/>
    <property type="match status" value="1"/>
</dbReference>
<dbReference type="SMART" id="SM00316">
    <property type="entry name" value="S1"/>
    <property type="match status" value="1"/>
</dbReference>
<dbReference type="SUPFAM" id="SSF88798">
    <property type="entry name" value="N-terminal, heterodimerisation domain of RBP7 (RpoE)"/>
    <property type="match status" value="1"/>
</dbReference>
<dbReference type="SUPFAM" id="SSF50249">
    <property type="entry name" value="Nucleic acid-binding proteins"/>
    <property type="match status" value="1"/>
</dbReference>
<feature type="chain" id="PRO_0000073993" description="DNA-directed RNA polymerase II subunit RPB7">
    <location>
        <begin position="1"/>
        <end position="171"/>
    </location>
</feature>
<feature type="mutagenesis site" description="Lowers nucleic-acid binding of RPB4-RPB7 by 10-fold; no effect on association with Pol II core complex; abolishes transcriptional activity of Pol II." evidence="1">
    <location>
        <begin position="108"/>
        <end position="113"/>
    </location>
</feature>
<feature type="mutagenesis site" description="No effect on nucleic-acid binding of RPB4-RPB7 and on association with Pol II core complex; abolishes transcriptional activity of Pol II." evidence="1">
    <location>
        <begin position="151"/>
        <end position="158"/>
    </location>
</feature>
<feature type="strand" evidence="10">
    <location>
        <begin position="2"/>
        <end position="10"/>
    </location>
</feature>
<feature type="helix" evidence="13">
    <location>
        <begin position="15"/>
        <end position="17"/>
    </location>
</feature>
<feature type="strand" evidence="11">
    <location>
        <begin position="19"/>
        <end position="21"/>
    </location>
</feature>
<feature type="helix" evidence="10">
    <location>
        <begin position="22"/>
        <end position="34"/>
    </location>
</feature>
<feature type="strand" evidence="10">
    <location>
        <begin position="37"/>
        <end position="39"/>
    </location>
</feature>
<feature type="turn" evidence="10">
    <location>
        <begin position="40"/>
        <end position="42"/>
    </location>
</feature>
<feature type="strand" evidence="10">
    <location>
        <begin position="43"/>
        <end position="48"/>
    </location>
</feature>
<feature type="helix" evidence="10">
    <location>
        <begin position="51"/>
        <end position="53"/>
    </location>
</feature>
<feature type="strand" evidence="13">
    <location>
        <begin position="59"/>
        <end position="61"/>
    </location>
</feature>
<feature type="strand" evidence="13">
    <location>
        <begin position="63"/>
        <end position="66"/>
    </location>
</feature>
<feature type="strand" evidence="10">
    <location>
        <begin position="71"/>
        <end position="79"/>
    </location>
</feature>
<feature type="strand" evidence="10">
    <location>
        <begin position="86"/>
        <end position="95"/>
    </location>
</feature>
<feature type="strand" evidence="10">
    <location>
        <begin position="98"/>
        <end position="103"/>
    </location>
</feature>
<feature type="strand" evidence="10">
    <location>
        <begin position="106"/>
        <end position="111"/>
    </location>
</feature>
<feature type="helix" evidence="10">
    <location>
        <begin position="112"/>
        <end position="114"/>
    </location>
</feature>
<feature type="strand" evidence="14">
    <location>
        <begin position="120"/>
        <end position="122"/>
    </location>
</feature>
<feature type="strand" evidence="10">
    <location>
        <begin position="125"/>
        <end position="127"/>
    </location>
</feature>
<feature type="strand" evidence="14">
    <location>
        <begin position="129"/>
        <end position="132"/>
    </location>
</feature>
<feature type="strand" evidence="13">
    <location>
        <begin position="133"/>
        <end position="135"/>
    </location>
</feature>
<feature type="strand" evidence="11">
    <location>
        <begin position="136"/>
        <end position="138"/>
    </location>
</feature>
<feature type="strand" evidence="10">
    <location>
        <begin position="142"/>
        <end position="153"/>
    </location>
</feature>
<feature type="strand" evidence="10">
    <location>
        <begin position="156"/>
        <end position="162"/>
    </location>
</feature>
<feature type="turn" evidence="13">
    <location>
        <begin position="166"/>
        <end position="168"/>
    </location>
</feature>
<feature type="strand" evidence="12">
    <location>
        <begin position="169"/>
        <end position="171"/>
    </location>
</feature>
<evidence type="ECO:0000269" key="1">
    <source>
    </source>
</evidence>
<evidence type="ECO:0000269" key="2">
    <source>
    </source>
</evidence>
<evidence type="ECO:0000269" key="3">
    <source>
    </source>
</evidence>
<evidence type="ECO:0000269" key="4">
    <source>
    </source>
</evidence>
<evidence type="ECO:0000269" key="5">
    <source>
    </source>
</evidence>
<evidence type="ECO:0000269" key="6">
    <source>
    </source>
</evidence>
<evidence type="ECO:0000269" key="7">
    <source>
    </source>
</evidence>
<evidence type="ECO:0000269" key="8">
    <source>
    </source>
</evidence>
<evidence type="ECO:0000305" key="9"/>
<evidence type="ECO:0007829" key="10">
    <source>
        <dbReference type="PDB" id="1Y14"/>
    </source>
</evidence>
<evidence type="ECO:0007829" key="11">
    <source>
        <dbReference type="PDB" id="3HOU"/>
    </source>
</evidence>
<evidence type="ECO:0007829" key="12">
    <source>
        <dbReference type="PDB" id="7ML0"/>
    </source>
</evidence>
<evidence type="ECO:0007829" key="13">
    <source>
        <dbReference type="PDB" id="8JCH"/>
    </source>
</evidence>
<evidence type="ECO:0007829" key="14">
    <source>
        <dbReference type="PDB" id="8K5P"/>
    </source>
</evidence>
<protein>
    <recommendedName>
        <fullName>DNA-directed RNA polymerase II subunit RPB7</fullName>
        <shortName>RNA polymerase II subunit B7</shortName>
    </recommendedName>
    <alternativeName>
        <fullName>B16</fullName>
    </alternativeName>
</protein>
<gene>
    <name type="primary">RPB7</name>
    <name type="ordered locus">YDR404C</name>
    <name type="ORF">D9509.22</name>
</gene>